<accession>D5GAC6</accession>
<feature type="chain" id="PRO_0000411813" description="Probable Xaa-Pro aminopeptidase P">
    <location>
        <begin position="1"/>
        <end position="619"/>
    </location>
</feature>
<feature type="binding site" evidence="1">
    <location>
        <position position="416"/>
    </location>
    <ligand>
        <name>Mn(2+)</name>
        <dbReference type="ChEBI" id="CHEBI:29035"/>
        <label>2</label>
    </ligand>
</feature>
<feature type="binding site" evidence="1">
    <location>
        <position position="427"/>
    </location>
    <ligand>
        <name>Mn(2+)</name>
        <dbReference type="ChEBI" id="CHEBI:29035"/>
        <label>1</label>
    </ligand>
</feature>
<feature type="binding site" evidence="1">
    <location>
        <position position="427"/>
    </location>
    <ligand>
        <name>Mn(2+)</name>
        <dbReference type="ChEBI" id="CHEBI:29035"/>
        <label>2</label>
    </ligand>
</feature>
<feature type="binding site" evidence="1">
    <location>
        <position position="525"/>
    </location>
    <ligand>
        <name>Mn(2+)</name>
        <dbReference type="ChEBI" id="CHEBI:29035"/>
        <label>1</label>
    </ligand>
</feature>
<feature type="binding site" evidence="1">
    <location>
        <position position="539"/>
    </location>
    <ligand>
        <name>Mn(2+)</name>
        <dbReference type="ChEBI" id="CHEBI:29035"/>
        <label>1</label>
    </ligand>
</feature>
<feature type="binding site" evidence="1">
    <location>
        <position position="539"/>
    </location>
    <ligand>
        <name>Mn(2+)</name>
        <dbReference type="ChEBI" id="CHEBI:29035"/>
        <label>2</label>
    </ligand>
</feature>
<evidence type="ECO:0000250" key="1"/>
<evidence type="ECO:0000305" key="2"/>
<protein>
    <recommendedName>
        <fullName>Probable Xaa-Pro aminopeptidase P</fullName>
        <shortName>AMPP</shortName>
        <shortName>Aminopeptidase P</shortName>
        <ecNumber>3.4.11.9</ecNumber>
    </recommendedName>
    <alternativeName>
        <fullName>Aminoacylproline aminopeptidase</fullName>
    </alternativeName>
    <alternativeName>
        <fullName>Prolidase</fullName>
    </alternativeName>
</protein>
<gene>
    <name type="primary">AMPP</name>
    <name type="ORF">GSTUM_00005237001</name>
</gene>
<proteinExistence type="inferred from homology"/>
<comment type="function">
    <text evidence="1">Catalyzes the removal of a penultimate prolyl residue from the N-termini of peptides.</text>
</comment>
<comment type="catalytic activity">
    <reaction>
        <text>Release of any N-terminal amino acid, including proline, that is linked to proline, even from a dipeptide or tripeptide.</text>
        <dbReference type="EC" id="3.4.11.9"/>
    </reaction>
</comment>
<comment type="cofactor">
    <cofactor evidence="1">
        <name>Mn(2+)</name>
        <dbReference type="ChEBI" id="CHEBI:29035"/>
    </cofactor>
    <text evidence="1">Binds 2 manganese ions per subunit.</text>
</comment>
<comment type="similarity">
    <text evidence="2">Belongs to the peptidase M24B family.</text>
</comment>
<reference key="1">
    <citation type="journal article" date="2010" name="Nature">
        <title>Perigord black truffle genome uncovers evolutionary origins and mechanisms of symbiosis.</title>
        <authorList>
            <person name="Martin F."/>
            <person name="Kohler A."/>
            <person name="Murat C."/>
            <person name="Balestrini R."/>
            <person name="Coutinho P.M."/>
            <person name="Jaillon O."/>
            <person name="Montanini B."/>
            <person name="Morin E."/>
            <person name="Noel B."/>
            <person name="Percudani R."/>
            <person name="Porcel B."/>
            <person name="Rubini A."/>
            <person name="Amicucci A."/>
            <person name="Amselem J."/>
            <person name="Anthouard V."/>
            <person name="Arcioni S."/>
            <person name="Artiguenave F."/>
            <person name="Aury J.M."/>
            <person name="Ballario P."/>
            <person name="Bolchi A."/>
            <person name="Brenna A."/>
            <person name="Brun A."/>
            <person name="Buee M."/>
            <person name="Cantarel B."/>
            <person name="Chevalier G."/>
            <person name="Couloux A."/>
            <person name="Da Silva C."/>
            <person name="Denoeud F."/>
            <person name="Duplessis S."/>
            <person name="Ghignone S."/>
            <person name="Hilselberger B."/>
            <person name="Iotti M."/>
            <person name="Marcais B."/>
            <person name="Mello A."/>
            <person name="Miranda M."/>
            <person name="Pacioni G."/>
            <person name="Quesneville H."/>
            <person name="Riccioni C."/>
            <person name="Ruotolo R."/>
            <person name="Splivallo R."/>
            <person name="Stocchi V."/>
            <person name="Tisserant E."/>
            <person name="Viscomi A.R."/>
            <person name="Zambonelli A."/>
            <person name="Zampieri E."/>
            <person name="Henrissat B."/>
            <person name="Lebrun M.H."/>
            <person name="Paolocci F."/>
            <person name="Bonfante P."/>
            <person name="Ottonello S."/>
            <person name="Wincker P."/>
        </authorList>
    </citation>
    <scope>NUCLEOTIDE SEQUENCE [LARGE SCALE GENOMIC DNA]</scope>
    <source>
        <strain>Mel28</strain>
    </source>
</reference>
<sequence>METVDTTSRLAKLRELMKRERVDVYVVPSEDAHSSEYICAADARRAFISGFTGSAGCAIVTQEKAALSTDGRYFNQAARQLDENWELLKQGLPDVPTWQEWVAQQAEGGKNVGVDATVITAQQAKSLETRIKKKGGTSLLGIPNNLIDEVWGADRPNRPNNPVMVLDEKYSGKEFPLKIEAVRKELENKKSPGFVVSMLDEIAWLFNLRGTDIPYNPVFFSYAFISPESTTLYIDSSKLDEKVIAHLGSAVKIRPYHEIFDEIDLLAQKLKVGQPETDSKASEDGGKWLVSNKTSWALSKALGGDDAIEVIRSPVEEEKAVKNDTEKEGMKRCHIRDGAALTEYFAWLEDELLKGTKIDEVQAADKLEQIRSRGENFMGLSFDTISSTGPNAAVIHYKPEAGNCSVIDPKAIYLCDSGAQYLDGTTDTTRTLHFGEPTDMERKSYTLVLKGMIALDRAIFPKGTSGFALDILARQFLWSEGLDYRHGTGHGVGSFLNVHEGPFGIGTRIQYSEVALSPGMFVSNEPGYYEDGSFGIRIENIIMVKEVKTSHSFGDRPYFGFERVTMVPMCRKLIDAGLLTPAETEWLNSYHAEVFEKTHGFFEKDSLASKWLKRETTPI</sequence>
<keyword id="KW-0031">Aminopeptidase</keyword>
<keyword id="KW-0378">Hydrolase</keyword>
<keyword id="KW-0464">Manganese</keyword>
<keyword id="KW-0479">Metal-binding</keyword>
<keyword id="KW-0482">Metalloprotease</keyword>
<keyword id="KW-0645">Protease</keyword>
<keyword id="KW-1185">Reference proteome</keyword>
<organism>
    <name type="scientific">Tuber melanosporum (strain Mel28)</name>
    <name type="common">Perigord black truffle</name>
    <dbReference type="NCBI Taxonomy" id="656061"/>
    <lineage>
        <taxon>Eukaryota</taxon>
        <taxon>Fungi</taxon>
        <taxon>Dikarya</taxon>
        <taxon>Ascomycota</taxon>
        <taxon>Pezizomycotina</taxon>
        <taxon>Pezizomycetes</taxon>
        <taxon>Pezizales</taxon>
        <taxon>Tuberaceae</taxon>
        <taxon>Tuber</taxon>
    </lineage>
</organism>
<name>AMPP1_TUBMM</name>
<dbReference type="EC" id="3.4.11.9"/>
<dbReference type="EMBL" id="FN430075">
    <property type="protein sequence ID" value="CAZ81480.1"/>
    <property type="molecule type" value="Genomic_DNA"/>
</dbReference>
<dbReference type="RefSeq" id="XP_002837289.1">
    <property type="nucleotide sequence ID" value="XM_002837243.1"/>
</dbReference>
<dbReference type="SMR" id="D5GAC6"/>
<dbReference type="FunCoup" id="D5GAC6">
    <property type="interactions" value="366"/>
</dbReference>
<dbReference type="STRING" id="656061.D5GAC6"/>
<dbReference type="EnsemblFungi" id="CAZ81480">
    <property type="protein sequence ID" value="CAZ81480"/>
    <property type="gene ID" value="GSTUM_00005237001"/>
</dbReference>
<dbReference type="GeneID" id="9185762"/>
<dbReference type="KEGG" id="tml:GSTUM_00005237001"/>
<dbReference type="eggNOG" id="KOG2413">
    <property type="taxonomic scope" value="Eukaryota"/>
</dbReference>
<dbReference type="HOGENOM" id="CLU_011781_2_3_1"/>
<dbReference type="InParanoid" id="D5GAC6"/>
<dbReference type="OMA" id="EPGMILS"/>
<dbReference type="Proteomes" id="UP000006911">
    <property type="component" value="Unassembled WGS sequence"/>
</dbReference>
<dbReference type="GO" id="GO:0005737">
    <property type="term" value="C:cytoplasm"/>
    <property type="evidence" value="ECO:0007669"/>
    <property type="project" value="UniProtKB-ARBA"/>
</dbReference>
<dbReference type="GO" id="GO:0046872">
    <property type="term" value="F:metal ion binding"/>
    <property type="evidence" value="ECO:0007669"/>
    <property type="project" value="UniProtKB-KW"/>
</dbReference>
<dbReference type="GO" id="GO:0070006">
    <property type="term" value="F:metalloaminopeptidase activity"/>
    <property type="evidence" value="ECO:0007669"/>
    <property type="project" value="InterPro"/>
</dbReference>
<dbReference type="GO" id="GO:0006508">
    <property type="term" value="P:proteolysis"/>
    <property type="evidence" value="ECO:0007669"/>
    <property type="project" value="UniProtKB-KW"/>
</dbReference>
<dbReference type="CDD" id="cd01085">
    <property type="entry name" value="APP"/>
    <property type="match status" value="1"/>
</dbReference>
<dbReference type="FunFam" id="3.40.350.10:FF:000010">
    <property type="entry name" value="Probable Xaa-Pro aminopeptidase P"/>
    <property type="match status" value="1"/>
</dbReference>
<dbReference type="FunFam" id="3.90.230.10:FF:000007">
    <property type="entry name" value="Xaa-Pro aminopeptidase P"/>
    <property type="match status" value="1"/>
</dbReference>
<dbReference type="FunFam" id="3.40.350.10:FF:000003">
    <property type="entry name" value="Xaa-pro aminopeptidase P"/>
    <property type="match status" value="1"/>
</dbReference>
<dbReference type="Gene3D" id="3.90.230.10">
    <property type="entry name" value="Creatinase/methionine aminopeptidase superfamily"/>
    <property type="match status" value="1"/>
</dbReference>
<dbReference type="Gene3D" id="3.40.350.10">
    <property type="entry name" value="Creatinase/prolidase N-terminal domain"/>
    <property type="match status" value="2"/>
</dbReference>
<dbReference type="InterPro" id="IPR029149">
    <property type="entry name" value="Creatin/AminoP/Spt16_N"/>
</dbReference>
<dbReference type="InterPro" id="IPR036005">
    <property type="entry name" value="Creatinase/aminopeptidase-like"/>
</dbReference>
<dbReference type="InterPro" id="IPR000587">
    <property type="entry name" value="Creatinase_N"/>
</dbReference>
<dbReference type="InterPro" id="IPR000994">
    <property type="entry name" value="Pept_M24"/>
</dbReference>
<dbReference type="InterPro" id="IPR033740">
    <property type="entry name" value="Pept_M24B"/>
</dbReference>
<dbReference type="InterPro" id="IPR032416">
    <property type="entry name" value="Peptidase_M24_C"/>
</dbReference>
<dbReference type="InterPro" id="IPR001131">
    <property type="entry name" value="Peptidase_M24B_aminopep-P_CS"/>
</dbReference>
<dbReference type="InterPro" id="IPR050422">
    <property type="entry name" value="X-Pro_aminopeptidase_P"/>
</dbReference>
<dbReference type="PANTHER" id="PTHR43763">
    <property type="entry name" value="XAA-PRO AMINOPEPTIDASE 1"/>
    <property type="match status" value="1"/>
</dbReference>
<dbReference type="PANTHER" id="PTHR43763:SF6">
    <property type="entry name" value="XAA-PRO AMINOPEPTIDASE 1"/>
    <property type="match status" value="1"/>
</dbReference>
<dbReference type="Pfam" id="PF01321">
    <property type="entry name" value="Creatinase_N"/>
    <property type="match status" value="1"/>
</dbReference>
<dbReference type="Pfam" id="PF16189">
    <property type="entry name" value="Creatinase_N_2"/>
    <property type="match status" value="1"/>
</dbReference>
<dbReference type="Pfam" id="PF00557">
    <property type="entry name" value="Peptidase_M24"/>
    <property type="match status" value="1"/>
</dbReference>
<dbReference type="Pfam" id="PF16188">
    <property type="entry name" value="Peptidase_M24_C"/>
    <property type="match status" value="1"/>
</dbReference>
<dbReference type="SUPFAM" id="SSF55920">
    <property type="entry name" value="Creatinase/aminopeptidase"/>
    <property type="match status" value="1"/>
</dbReference>
<dbReference type="SUPFAM" id="SSF53092">
    <property type="entry name" value="Creatinase/prolidase N-terminal domain"/>
    <property type="match status" value="1"/>
</dbReference>
<dbReference type="PROSITE" id="PS00491">
    <property type="entry name" value="PROLINE_PEPTIDASE"/>
    <property type="match status" value="1"/>
</dbReference>